<protein>
    <recommendedName>
        <fullName evidence="1">Acyl-[acyl-carrier-protein]--UDP-N-acetylglucosamine O-acyltransferase</fullName>
        <shortName evidence="1">UDP-N-acetylglucosamine acyltransferase</shortName>
        <ecNumber evidence="1">2.3.1.129</ecNumber>
    </recommendedName>
</protein>
<proteinExistence type="inferred from homology"/>
<gene>
    <name evidence="1" type="primary">lpxA</name>
    <name type="ordered locus">NGO_1806</name>
</gene>
<name>LPXA_NEIG1</name>
<accession>Q5F5W3</accession>
<organism>
    <name type="scientific">Neisseria gonorrhoeae (strain ATCC 700825 / FA 1090)</name>
    <dbReference type="NCBI Taxonomy" id="242231"/>
    <lineage>
        <taxon>Bacteria</taxon>
        <taxon>Pseudomonadati</taxon>
        <taxon>Pseudomonadota</taxon>
        <taxon>Betaproteobacteria</taxon>
        <taxon>Neisseriales</taxon>
        <taxon>Neisseriaceae</taxon>
        <taxon>Neisseria</taxon>
    </lineage>
</organism>
<sequence>MTLIHPTAVIDPKAELDSGVKVGAYTVIGPNVRIGANTEIGPHAVINGHTTIGENNRIFQFASLGEIPQDKKYRDEPTKLIIGNGNTIREFTTFNLGTVTGIGETRIGDDNWIMAYCHLAHDCVVGNHTIFANNASLAGHVTVGDYVVLGGYTLVFQFCRIGDYAMTAFAAGVHKDVPPYFMASGYRAEPAGLNSEGMRRNGFTAEQISAVKDVYKTLYHRGIPFEEAKADILRRAETQAELAVFQDFFAQSTRGIIR</sequence>
<reference key="1">
    <citation type="submission" date="2003-03" db="EMBL/GenBank/DDBJ databases">
        <title>The complete genome sequence of Neisseria gonorrhoeae.</title>
        <authorList>
            <person name="Lewis L.A."/>
            <person name="Gillaspy A.F."/>
            <person name="McLaughlin R.E."/>
            <person name="Gipson M."/>
            <person name="Ducey T.F."/>
            <person name="Ownbey T."/>
            <person name="Hartman K."/>
            <person name="Nydick C."/>
            <person name="Carson M.B."/>
            <person name="Vaughn J."/>
            <person name="Thomson C."/>
            <person name="Song L."/>
            <person name="Lin S."/>
            <person name="Yuan X."/>
            <person name="Najar F."/>
            <person name="Zhan M."/>
            <person name="Ren Q."/>
            <person name="Zhu H."/>
            <person name="Qi S."/>
            <person name="Kenton S.M."/>
            <person name="Lai H."/>
            <person name="White J.D."/>
            <person name="Clifton S."/>
            <person name="Roe B.A."/>
            <person name="Dyer D.W."/>
        </authorList>
    </citation>
    <scope>NUCLEOTIDE SEQUENCE [LARGE SCALE GENOMIC DNA]</scope>
    <source>
        <strain>ATCC 700825 / FA 1090</strain>
    </source>
</reference>
<feature type="chain" id="PRO_0000302582" description="Acyl-[acyl-carrier-protein]--UDP-N-acetylglucosamine O-acyltransferase">
    <location>
        <begin position="1"/>
        <end position="258"/>
    </location>
</feature>
<comment type="function">
    <text evidence="1">Involved in the biosynthesis of lipid A, a phosphorylated glycolipid that anchors the lipopolysaccharide to the outer membrane of the cell.</text>
</comment>
<comment type="catalytic activity">
    <reaction evidence="1">
        <text>a (3R)-hydroxyacyl-[ACP] + UDP-N-acetyl-alpha-D-glucosamine = a UDP-3-O-[(3R)-3-hydroxyacyl]-N-acetyl-alpha-D-glucosamine + holo-[ACP]</text>
        <dbReference type="Rhea" id="RHEA:67812"/>
        <dbReference type="Rhea" id="RHEA-COMP:9685"/>
        <dbReference type="Rhea" id="RHEA-COMP:9945"/>
        <dbReference type="ChEBI" id="CHEBI:57705"/>
        <dbReference type="ChEBI" id="CHEBI:64479"/>
        <dbReference type="ChEBI" id="CHEBI:78827"/>
        <dbReference type="ChEBI" id="CHEBI:173225"/>
        <dbReference type="EC" id="2.3.1.129"/>
    </reaction>
</comment>
<comment type="pathway">
    <text evidence="1">Glycolipid biosynthesis; lipid IV(A) biosynthesis; lipid IV(A) from (3R)-3-hydroxytetradecanoyl-[acyl-carrier-protein] and UDP-N-acetyl-alpha-D-glucosamine: step 1/6.</text>
</comment>
<comment type="subunit">
    <text evidence="1">Homotrimer.</text>
</comment>
<comment type="subcellular location">
    <subcellularLocation>
        <location evidence="1">Cytoplasm</location>
    </subcellularLocation>
</comment>
<comment type="similarity">
    <text evidence="1">Belongs to the transferase hexapeptide repeat family. LpxA subfamily.</text>
</comment>
<keyword id="KW-0012">Acyltransferase</keyword>
<keyword id="KW-0963">Cytoplasm</keyword>
<keyword id="KW-0441">Lipid A biosynthesis</keyword>
<keyword id="KW-0444">Lipid biosynthesis</keyword>
<keyword id="KW-0443">Lipid metabolism</keyword>
<keyword id="KW-1185">Reference proteome</keyword>
<keyword id="KW-0677">Repeat</keyword>
<keyword id="KW-0808">Transferase</keyword>
<evidence type="ECO:0000255" key="1">
    <source>
        <dbReference type="HAMAP-Rule" id="MF_00387"/>
    </source>
</evidence>
<dbReference type="EC" id="2.3.1.129" evidence="1"/>
<dbReference type="EMBL" id="AE004969">
    <property type="protein sequence ID" value="AAW90424.1"/>
    <property type="molecule type" value="Genomic_DNA"/>
</dbReference>
<dbReference type="RefSeq" id="WP_003690038.1">
    <property type="nucleotide sequence ID" value="NC_002946.2"/>
</dbReference>
<dbReference type="RefSeq" id="YP_208836.1">
    <property type="nucleotide sequence ID" value="NC_002946.2"/>
</dbReference>
<dbReference type="SMR" id="Q5F5W3"/>
<dbReference type="STRING" id="242231.NGO_1806"/>
<dbReference type="GeneID" id="66754335"/>
<dbReference type="KEGG" id="ngo:NGO_1806"/>
<dbReference type="PATRIC" id="fig|242231.10.peg.2166"/>
<dbReference type="HOGENOM" id="CLU_061249_0_0_4"/>
<dbReference type="UniPathway" id="UPA00359">
    <property type="reaction ID" value="UER00477"/>
</dbReference>
<dbReference type="Proteomes" id="UP000000535">
    <property type="component" value="Chromosome"/>
</dbReference>
<dbReference type="GO" id="GO:0005737">
    <property type="term" value="C:cytoplasm"/>
    <property type="evidence" value="ECO:0007669"/>
    <property type="project" value="UniProtKB-SubCell"/>
</dbReference>
<dbReference type="GO" id="GO:0016020">
    <property type="term" value="C:membrane"/>
    <property type="evidence" value="ECO:0007669"/>
    <property type="project" value="GOC"/>
</dbReference>
<dbReference type="GO" id="GO:0008780">
    <property type="term" value="F:acyl-[acyl-carrier-protein]-UDP-N-acetylglucosamine O-acyltransferase activity"/>
    <property type="evidence" value="ECO:0007669"/>
    <property type="project" value="UniProtKB-UniRule"/>
</dbReference>
<dbReference type="GO" id="GO:0009245">
    <property type="term" value="P:lipid A biosynthetic process"/>
    <property type="evidence" value="ECO:0007669"/>
    <property type="project" value="UniProtKB-UniRule"/>
</dbReference>
<dbReference type="CDD" id="cd03351">
    <property type="entry name" value="LbH_UDP-GlcNAc_AT"/>
    <property type="match status" value="1"/>
</dbReference>
<dbReference type="Gene3D" id="2.160.10.10">
    <property type="entry name" value="Hexapeptide repeat proteins"/>
    <property type="match status" value="1"/>
</dbReference>
<dbReference type="Gene3D" id="1.20.1180.10">
    <property type="entry name" value="Udp N-acetylglucosamine O-acyltransferase, C-terminal domain"/>
    <property type="match status" value="1"/>
</dbReference>
<dbReference type="HAMAP" id="MF_00387">
    <property type="entry name" value="LpxA"/>
    <property type="match status" value="1"/>
</dbReference>
<dbReference type="InterPro" id="IPR029098">
    <property type="entry name" value="Acetyltransf_C"/>
</dbReference>
<dbReference type="InterPro" id="IPR037157">
    <property type="entry name" value="Acetyltransf_C_sf"/>
</dbReference>
<dbReference type="InterPro" id="IPR001451">
    <property type="entry name" value="Hexapep"/>
</dbReference>
<dbReference type="InterPro" id="IPR010137">
    <property type="entry name" value="Lipid_A_LpxA"/>
</dbReference>
<dbReference type="InterPro" id="IPR011004">
    <property type="entry name" value="Trimer_LpxA-like_sf"/>
</dbReference>
<dbReference type="NCBIfam" id="TIGR01852">
    <property type="entry name" value="lipid_A_lpxA"/>
    <property type="match status" value="1"/>
</dbReference>
<dbReference type="NCBIfam" id="NF003657">
    <property type="entry name" value="PRK05289.1"/>
    <property type="match status" value="1"/>
</dbReference>
<dbReference type="PANTHER" id="PTHR43480">
    <property type="entry name" value="ACYL-[ACYL-CARRIER-PROTEIN]--UDP-N-ACETYLGLUCOSAMINE O-ACYLTRANSFERASE"/>
    <property type="match status" value="1"/>
</dbReference>
<dbReference type="PANTHER" id="PTHR43480:SF1">
    <property type="entry name" value="ACYL-[ACYL-CARRIER-PROTEIN]--UDP-N-ACETYLGLUCOSAMINE O-ACYLTRANSFERASE, MITOCHONDRIAL-RELATED"/>
    <property type="match status" value="1"/>
</dbReference>
<dbReference type="Pfam" id="PF13720">
    <property type="entry name" value="Acetyltransf_11"/>
    <property type="match status" value="1"/>
</dbReference>
<dbReference type="Pfam" id="PF00132">
    <property type="entry name" value="Hexapep"/>
    <property type="match status" value="1"/>
</dbReference>
<dbReference type="PIRSF" id="PIRSF000456">
    <property type="entry name" value="UDP-GlcNAc_acltr"/>
    <property type="match status" value="1"/>
</dbReference>
<dbReference type="SUPFAM" id="SSF51161">
    <property type="entry name" value="Trimeric LpxA-like enzymes"/>
    <property type="match status" value="1"/>
</dbReference>